<feature type="chain" id="PRO_1000060355" description="S-adenosylmethionine decarboxylase beta chain" evidence="1">
    <location>
        <begin position="1"/>
        <end position="111"/>
    </location>
</feature>
<feature type="chain" id="PRO_1000060356" description="S-adenosylmethionine decarboxylase alpha chain" evidence="1">
    <location>
        <begin position="112"/>
        <end position="264"/>
    </location>
</feature>
<feature type="active site" description="Schiff-base intermediate with substrate; via pyruvic acid" evidence="1">
    <location>
        <position position="112"/>
    </location>
</feature>
<feature type="active site" description="Proton acceptor; for processing activity" evidence="1">
    <location>
        <position position="117"/>
    </location>
</feature>
<feature type="active site" description="Proton donor; for catalytic activity" evidence="1">
    <location>
        <position position="140"/>
    </location>
</feature>
<feature type="site" description="Cleavage (non-hydrolytic); by autolysis" evidence="1">
    <location>
        <begin position="111"/>
        <end position="112"/>
    </location>
</feature>
<feature type="modified residue" description="Pyruvic acid (Ser); by autocatalysis" evidence="1">
    <location>
        <position position="112"/>
    </location>
</feature>
<name>SPED_ENT38</name>
<keyword id="KW-0068">Autocatalytic cleavage</keyword>
<keyword id="KW-0210">Decarboxylase</keyword>
<keyword id="KW-0456">Lyase</keyword>
<keyword id="KW-0620">Polyamine biosynthesis</keyword>
<keyword id="KW-0670">Pyruvate</keyword>
<keyword id="KW-0949">S-adenosyl-L-methionine</keyword>
<keyword id="KW-0704">Schiff base</keyword>
<keyword id="KW-0745">Spermidine biosynthesis</keyword>
<keyword id="KW-0865">Zymogen</keyword>
<evidence type="ECO:0000255" key="1">
    <source>
        <dbReference type="HAMAP-Rule" id="MF_00465"/>
    </source>
</evidence>
<accession>A4W6M5</accession>
<sequence>MKKLKLHGFNNLTKSLSFCIYDICYVKTAEERDGYIAYIDELYNANRLTEILSETCSIIGANILNIARQDYEPQGASVTILVSEEPVDPQLIDPTEHPGPLPEAVVAHLDKSHICVHTYPESHPEAGLCTFRADIEVSTCGVISPLNALNYLIHQLESDIVTIDYRVRGFTRDINGMKYFIDHEINSIQNFMSEDMKGLYDMMDVNVYQENIFHTKMLLKEFDLKHYMFHTQPEDLSEEERKVITDLLWKEMREIYYGRNIPAV</sequence>
<gene>
    <name evidence="1" type="primary">speD</name>
    <name type="ordered locus">Ent638_0668</name>
</gene>
<proteinExistence type="inferred from homology"/>
<dbReference type="EC" id="4.1.1.50" evidence="1"/>
<dbReference type="EMBL" id="CP000653">
    <property type="protein sequence ID" value="ABP59355.1"/>
    <property type="molecule type" value="Genomic_DNA"/>
</dbReference>
<dbReference type="RefSeq" id="WP_012016076.1">
    <property type="nucleotide sequence ID" value="NC_009436.1"/>
</dbReference>
<dbReference type="SMR" id="A4W6M5"/>
<dbReference type="STRING" id="399742.Ent638_0668"/>
<dbReference type="GeneID" id="93307842"/>
<dbReference type="KEGG" id="ent:Ent638_0668"/>
<dbReference type="eggNOG" id="COG1586">
    <property type="taxonomic scope" value="Bacteria"/>
</dbReference>
<dbReference type="HOGENOM" id="CLU_092007_0_0_6"/>
<dbReference type="OrthoDB" id="5290709at2"/>
<dbReference type="UniPathway" id="UPA00331">
    <property type="reaction ID" value="UER00451"/>
</dbReference>
<dbReference type="Proteomes" id="UP000000230">
    <property type="component" value="Chromosome"/>
</dbReference>
<dbReference type="GO" id="GO:0005829">
    <property type="term" value="C:cytosol"/>
    <property type="evidence" value="ECO:0007669"/>
    <property type="project" value="TreeGrafter"/>
</dbReference>
<dbReference type="GO" id="GO:0004014">
    <property type="term" value="F:adenosylmethionine decarboxylase activity"/>
    <property type="evidence" value="ECO:0007669"/>
    <property type="project" value="UniProtKB-UniRule"/>
</dbReference>
<dbReference type="GO" id="GO:0008295">
    <property type="term" value="P:spermidine biosynthetic process"/>
    <property type="evidence" value="ECO:0007669"/>
    <property type="project" value="UniProtKB-UniRule"/>
</dbReference>
<dbReference type="FunFam" id="3.60.90.10:FF:000001">
    <property type="entry name" value="S-adenosylmethionine decarboxylase proenzyme"/>
    <property type="match status" value="1"/>
</dbReference>
<dbReference type="Gene3D" id="3.60.90.10">
    <property type="entry name" value="S-adenosylmethionine decarboxylase"/>
    <property type="match status" value="1"/>
</dbReference>
<dbReference type="HAMAP" id="MF_00465">
    <property type="entry name" value="AdoMetDC_2"/>
    <property type="match status" value="1"/>
</dbReference>
<dbReference type="InterPro" id="IPR003826">
    <property type="entry name" value="AdoMetDC_fam_prok"/>
</dbReference>
<dbReference type="InterPro" id="IPR009165">
    <property type="entry name" value="S-AdoMet_deCO2ase_bac"/>
</dbReference>
<dbReference type="InterPro" id="IPR016067">
    <property type="entry name" value="S-AdoMet_deCO2ase_core"/>
</dbReference>
<dbReference type="NCBIfam" id="TIGR03331">
    <property type="entry name" value="SAM_DCase_Eco"/>
    <property type="match status" value="1"/>
</dbReference>
<dbReference type="PANTHER" id="PTHR33866">
    <property type="entry name" value="S-ADENOSYLMETHIONINE DECARBOXYLASE PROENZYME"/>
    <property type="match status" value="1"/>
</dbReference>
<dbReference type="PANTHER" id="PTHR33866:SF1">
    <property type="entry name" value="S-ADENOSYLMETHIONINE DECARBOXYLASE PROENZYME"/>
    <property type="match status" value="1"/>
</dbReference>
<dbReference type="Pfam" id="PF02675">
    <property type="entry name" value="AdoMet_dc"/>
    <property type="match status" value="1"/>
</dbReference>
<dbReference type="PIRSF" id="PIRSF001356">
    <property type="entry name" value="SAM_decarboxylas"/>
    <property type="match status" value="1"/>
</dbReference>
<dbReference type="SUPFAM" id="SSF56276">
    <property type="entry name" value="S-adenosylmethionine decarboxylase"/>
    <property type="match status" value="1"/>
</dbReference>
<organism>
    <name type="scientific">Enterobacter sp. (strain 638)</name>
    <dbReference type="NCBI Taxonomy" id="399742"/>
    <lineage>
        <taxon>Bacteria</taxon>
        <taxon>Pseudomonadati</taxon>
        <taxon>Pseudomonadota</taxon>
        <taxon>Gammaproteobacteria</taxon>
        <taxon>Enterobacterales</taxon>
        <taxon>Enterobacteriaceae</taxon>
        <taxon>Enterobacter</taxon>
    </lineage>
</organism>
<comment type="function">
    <text evidence="1">Catalyzes the decarboxylation of S-adenosylmethionine to S-adenosylmethioninamine (dcAdoMet), the propylamine donor required for the synthesis of the polyamines spermine and spermidine from the diamine putrescine.</text>
</comment>
<comment type="catalytic activity">
    <reaction evidence="1">
        <text>S-adenosyl-L-methionine + H(+) = S-adenosyl 3-(methylsulfanyl)propylamine + CO2</text>
        <dbReference type="Rhea" id="RHEA:15981"/>
        <dbReference type="ChEBI" id="CHEBI:15378"/>
        <dbReference type="ChEBI" id="CHEBI:16526"/>
        <dbReference type="ChEBI" id="CHEBI:57443"/>
        <dbReference type="ChEBI" id="CHEBI:59789"/>
        <dbReference type="EC" id="4.1.1.50"/>
    </reaction>
</comment>
<comment type="cofactor">
    <cofactor evidence="1">
        <name>pyruvate</name>
        <dbReference type="ChEBI" id="CHEBI:15361"/>
    </cofactor>
    <text evidence="1">Binds 1 pyruvoyl group covalently per subunit.</text>
</comment>
<comment type="pathway">
    <text evidence="1">Amine and polyamine biosynthesis; S-adenosylmethioninamine biosynthesis; S-adenosylmethioninamine from S-adenosyl-L-methionine: step 1/1.</text>
</comment>
<comment type="subunit">
    <text evidence="1">Heterooctamer of four alpha and four beta chains arranged as a tetramer of alpha/beta heterodimers.</text>
</comment>
<comment type="PTM">
    <text evidence="1">Is synthesized initially as an inactive proenzyme. Formation of the active enzyme involves a self-maturation process in which the active site pyruvoyl group is generated from an internal serine residue via an autocatalytic post-translational modification. Two non-identical subunits are generated from the proenzyme in this reaction, and the pyruvate is formed at the N-terminus of the alpha chain, which is derived from the carboxyl end of the proenzyme. The post-translation cleavage follows an unusual pathway, termed non-hydrolytic serinolysis, in which the side chain hydroxyl group of the serine supplies its oxygen atom to form the C-terminus of the beta chain, while the remainder of the serine residue undergoes an oxidative deamination to produce ammonia and the pyruvoyl group blocking the N-terminus of the alpha chain.</text>
</comment>
<comment type="similarity">
    <text evidence="1">Belongs to the prokaryotic AdoMetDC family. Type 2 subfamily.</text>
</comment>
<protein>
    <recommendedName>
        <fullName evidence="1">S-adenosylmethionine decarboxylase proenzyme</fullName>
        <shortName evidence="1">AdoMetDC</shortName>
        <shortName evidence="1">SAMDC</shortName>
        <ecNumber evidence="1">4.1.1.50</ecNumber>
    </recommendedName>
    <component>
        <recommendedName>
            <fullName evidence="1">S-adenosylmethionine decarboxylase beta chain</fullName>
        </recommendedName>
    </component>
    <component>
        <recommendedName>
            <fullName evidence="1">S-adenosylmethionine decarboxylase alpha chain</fullName>
        </recommendedName>
    </component>
</protein>
<reference key="1">
    <citation type="journal article" date="2010" name="PLoS Genet.">
        <title>Genome sequence of the plant growth promoting endophytic bacterium Enterobacter sp. 638.</title>
        <authorList>
            <person name="Taghavi S."/>
            <person name="van der Lelie D."/>
            <person name="Hoffman A."/>
            <person name="Zhang Y.B."/>
            <person name="Walla M.D."/>
            <person name="Vangronsveld J."/>
            <person name="Newman L."/>
            <person name="Monchy S."/>
        </authorList>
    </citation>
    <scope>NUCLEOTIDE SEQUENCE [LARGE SCALE GENOMIC DNA]</scope>
    <source>
        <strain>638</strain>
    </source>
</reference>